<sequence>MKTLLLTLVVVTIVCLDLGDSLICYLGYNNPQTCAPGQNLCYTKKWCDAFCLQRGKVIQLGCAATCPTTKPYEEVTCCSRDKCNPHPAQRSR</sequence>
<protein>
    <recommendedName>
        <fullName>Long neurotoxin 469</fullName>
        <shortName>LNTX-469</shortName>
    </recommendedName>
</protein>
<feature type="signal peptide" evidence="1">
    <location>
        <begin position="1"/>
        <end position="21"/>
    </location>
</feature>
<feature type="chain" id="PRO_0000425523" description="Long neurotoxin 469">
    <location>
        <begin position="22"/>
        <end position="92"/>
    </location>
</feature>
<feature type="disulfide bond" evidence="1">
    <location>
        <begin position="24"/>
        <end position="41"/>
    </location>
</feature>
<feature type="disulfide bond" evidence="1">
    <location>
        <begin position="34"/>
        <end position="62"/>
    </location>
</feature>
<feature type="disulfide bond" evidence="1">
    <location>
        <begin position="47"/>
        <end position="51"/>
    </location>
</feature>
<feature type="disulfide bond" evidence="1">
    <location>
        <begin position="66"/>
        <end position="77"/>
    </location>
</feature>
<feature type="disulfide bond" evidence="1">
    <location>
        <begin position="78"/>
        <end position="83"/>
    </location>
</feature>
<evidence type="ECO:0000250" key="1"/>
<evidence type="ECO:0000250" key="2">
    <source>
        <dbReference type="UniProtKB" id="P60615"/>
    </source>
</evidence>
<evidence type="ECO:0000269" key="3">
    <source>
    </source>
</evidence>
<evidence type="ECO:0000305" key="4"/>
<name>3L246_DRYCN</name>
<accession>F8J2E5</accession>
<organism>
    <name type="scientific">Drysdalia coronoides</name>
    <name type="common">White-lipped snake</name>
    <name type="synonym">Hoplocephalus coronoides</name>
    <dbReference type="NCBI Taxonomy" id="66186"/>
    <lineage>
        <taxon>Eukaryota</taxon>
        <taxon>Metazoa</taxon>
        <taxon>Chordata</taxon>
        <taxon>Craniata</taxon>
        <taxon>Vertebrata</taxon>
        <taxon>Euteleostomi</taxon>
        <taxon>Lepidosauria</taxon>
        <taxon>Squamata</taxon>
        <taxon>Bifurcata</taxon>
        <taxon>Unidentata</taxon>
        <taxon>Episquamata</taxon>
        <taxon>Toxicofera</taxon>
        <taxon>Serpentes</taxon>
        <taxon>Colubroidea</taxon>
        <taxon>Elapidae</taxon>
        <taxon>Notechinae</taxon>
        <taxon>Drysdalia</taxon>
    </lineage>
</organism>
<proteinExistence type="evidence at protein level"/>
<reference key="1">
    <citation type="journal article" date="2011" name="J. Proteome Res.">
        <title>Identification of novel proteins from the venom of a cryptic snake Drysdalia coronoides by a combined transcriptomics and proteomics approach.</title>
        <authorList>
            <person name="Chatrath S.T."/>
            <person name="Chapeaurouge A."/>
            <person name="Lin Q."/>
            <person name="Lim T.K."/>
            <person name="Dunstan N."/>
            <person name="Mirtschin P."/>
            <person name="Kumar P.P."/>
            <person name="Kini R.M."/>
        </authorList>
    </citation>
    <scope>NUCLEOTIDE SEQUENCE [MRNA]</scope>
    <scope>IDENTIFICATION BY MASS SPECTROMETRY</scope>
    <scope>SUBCELLULAR LOCATION</scope>
    <source>
        <tissue>Venom</tissue>
        <tissue>Venom gland</tissue>
    </source>
</reference>
<dbReference type="EMBL" id="FJ752463">
    <property type="protein sequence ID" value="ACR78485.1"/>
    <property type="molecule type" value="mRNA"/>
</dbReference>
<dbReference type="SMR" id="F8J2E5"/>
<dbReference type="GO" id="GO:0005576">
    <property type="term" value="C:extracellular region"/>
    <property type="evidence" value="ECO:0007669"/>
    <property type="project" value="UniProtKB-SubCell"/>
</dbReference>
<dbReference type="GO" id="GO:0030550">
    <property type="term" value="F:acetylcholine receptor inhibitor activity"/>
    <property type="evidence" value="ECO:0007669"/>
    <property type="project" value="UniProtKB-KW"/>
</dbReference>
<dbReference type="GO" id="GO:0099106">
    <property type="term" value="F:ion channel regulator activity"/>
    <property type="evidence" value="ECO:0007669"/>
    <property type="project" value="UniProtKB-KW"/>
</dbReference>
<dbReference type="GO" id="GO:0090729">
    <property type="term" value="F:toxin activity"/>
    <property type="evidence" value="ECO:0007669"/>
    <property type="project" value="UniProtKB-KW"/>
</dbReference>
<dbReference type="CDD" id="cd00206">
    <property type="entry name" value="TFP_snake_toxin"/>
    <property type="match status" value="1"/>
</dbReference>
<dbReference type="Gene3D" id="2.10.60.10">
    <property type="entry name" value="CD59"/>
    <property type="match status" value="1"/>
</dbReference>
<dbReference type="InterPro" id="IPR003571">
    <property type="entry name" value="Snake_3FTx"/>
</dbReference>
<dbReference type="InterPro" id="IPR045860">
    <property type="entry name" value="Snake_toxin-like_sf"/>
</dbReference>
<dbReference type="InterPro" id="IPR018354">
    <property type="entry name" value="Snake_toxin_con_site"/>
</dbReference>
<dbReference type="InterPro" id="IPR054131">
    <property type="entry name" value="Toxin_cobra-type"/>
</dbReference>
<dbReference type="Pfam" id="PF21947">
    <property type="entry name" value="Toxin_cobra-type"/>
    <property type="match status" value="1"/>
</dbReference>
<dbReference type="SUPFAM" id="SSF57302">
    <property type="entry name" value="Snake toxin-like"/>
    <property type="match status" value="1"/>
</dbReference>
<dbReference type="PROSITE" id="PS00272">
    <property type="entry name" value="SNAKE_TOXIN"/>
    <property type="match status" value="1"/>
</dbReference>
<comment type="function">
    <text evidence="2">Binds with high affinity to muscular (alpha-1/CHRNA1) and neuronal (alpha-7/CHRNA7) nicotinic acetylcholine receptor (nAChR) and inhibits acetylcholine from binding to the receptor, thereby impairing neuromuscular and neuronal transmission.</text>
</comment>
<comment type="subcellular location">
    <subcellularLocation>
        <location evidence="3">Secreted</location>
    </subcellularLocation>
</comment>
<comment type="tissue specificity">
    <text evidence="4">Expressed by the venom gland.</text>
</comment>
<comment type="similarity">
    <text evidence="4">Belongs to the three-finger toxin family. Long-chain subfamily. Type II alpha-neurotoxin sub-subfamily.</text>
</comment>
<keyword id="KW-0008">Acetylcholine receptor inhibiting toxin</keyword>
<keyword id="KW-1015">Disulfide bond</keyword>
<keyword id="KW-0872">Ion channel impairing toxin</keyword>
<keyword id="KW-0528">Neurotoxin</keyword>
<keyword id="KW-0629">Postsynaptic neurotoxin</keyword>
<keyword id="KW-0964">Secreted</keyword>
<keyword id="KW-0732">Signal</keyword>
<keyword id="KW-0800">Toxin</keyword>